<organism>
    <name type="scientific">Nanoarchaeum equitans (strain Kin4-M)</name>
    <dbReference type="NCBI Taxonomy" id="228908"/>
    <lineage>
        <taxon>Archaea</taxon>
        <taxon>Nanobdellota</taxon>
        <taxon>Candidatus Nanoarchaeia</taxon>
        <taxon>Nanoarchaeales</taxon>
        <taxon>Nanoarchaeaceae</taxon>
        <taxon>Nanoarchaeum</taxon>
    </lineage>
</organism>
<evidence type="ECO:0000255" key="1">
    <source>
        <dbReference type="HAMAP-Rule" id="MF_00029"/>
    </source>
</evidence>
<evidence type="ECO:0000305" key="2"/>
<proteinExistence type="inferred from homology"/>
<accession>P61301</accession>
<comment type="subunit">
    <text evidence="1">Part of the 30S ribosomal subunit.</text>
</comment>
<comment type="similarity">
    <text evidence="1">Belongs to the eukaryotic ribosomal protein eS8 family.</text>
</comment>
<reference key="1">
    <citation type="journal article" date="2003" name="Proc. Natl. Acad. Sci. U.S.A.">
        <title>The genome of Nanoarchaeum equitans: insights into early archaeal evolution and derived parasitism.</title>
        <authorList>
            <person name="Waters E."/>
            <person name="Hohn M.J."/>
            <person name="Ahel I."/>
            <person name="Graham D.E."/>
            <person name="Adams M.D."/>
            <person name="Barnstead M."/>
            <person name="Beeson K.Y."/>
            <person name="Bibbs L."/>
            <person name="Bolanos R."/>
            <person name="Keller M."/>
            <person name="Kretz K."/>
            <person name="Lin X."/>
            <person name="Mathur E."/>
            <person name="Ni J."/>
            <person name="Podar M."/>
            <person name="Richardson T."/>
            <person name="Sutton G.G."/>
            <person name="Simon M."/>
            <person name="Soell D."/>
            <person name="Stetter K.O."/>
            <person name="Short J.M."/>
            <person name="Noorderwier M."/>
        </authorList>
    </citation>
    <scope>NUCLEOTIDE SEQUENCE [LARGE SCALE GENOMIC DNA]</scope>
    <source>
        <strain>Kin4-M</strain>
    </source>
</reference>
<sequence>MAYPYQGRDNRLITGRIHPRARKKRKYELGREPTFTRVGERKIKKIRVRGGNIKIRLKRDMYVNVYDPTQGKTVKAKIVRFLDNPSNRNFARMGILTKGAIVETELGKVKITSRPGQDGVLNGVLIQ</sequence>
<keyword id="KW-1185">Reference proteome</keyword>
<keyword id="KW-0687">Ribonucleoprotein</keyword>
<keyword id="KW-0689">Ribosomal protein</keyword>
<name>RS8E_NANEQ</name>
<dbReference type="EMBL" id="AE017199">
    <property type="protein sequence ID" value="AAR39312.1"/>
    <property type="molecule type" value="Genomic_DNA"/>
</dbReference>
<dbReference type="SMR" id="P61301"/>
<dbReference type="STRING" id="228908.NEQ469"/>
<dbReference type="EnsemblBacteria" id="AAR39312">
    <property type="protein sequence ID" value="AAR39312"/>
    <property type="gene ID" value="NEQ469"/>
</dbReference>
<dbReference type="KEGG" id="neq:NEQ469"/>
<dbReference type="PATRIC" id="fig|228908.8.peg.483"/>
<dbReference type="HOGENOM" id="CLU_080597_2_1_2"/>
<dbReference type="Proteomes" id="UP000000578">
    <property type="component" value="Chromosome"/>
</dbReference>
<dbReference type="GO" id="GO:1990904">
    <property type="term" value="C:ribonucleoprotein complex"/>
    <property type="evidence" value="ECO:0007669"/>
    <property type="project" value="UniProtKB-KW"/>
</dbReference>
<dbReference type="GO" id="GO:0005840">
    <property type="term" value="C:ribosome"/>
    <property type="evidence" value="ECO:0007669"/>
    <property type="project" value="UniProtKB-KW"/>
</dbReference>
<dbReference type="GO" id="GO:0003735">
    <property type="term" value="F:structural constituent of ribosome"/>
    <property type="evidence" value="ECO:0007669"/>
    <property type="project" value="InterPro"/>
</dbReference>
<dbReference type="GO" id="GO:0006412">
    <property type="term" value="P:translation"/>
    <property type="evidence" value="ECO:0007669"/>
    <property type="project" value="UniProtKB-UniRule"/>
</dbReference>
<dbReference type="CDD" id="cd11382">
    <property type="entry name" value="Ribosomal_S8e"/>
    <property type="match status" value="1"/>
</dbReference>
<dbReference type="Gene3D" id="2.40.10.310">
    <property type="match status" value="1"/>
</dbReference>
<dbReference type="HAMAP" id="MF_00029">
    <property type="entry name" value="Ribosomal_eS8"/>
    <property type="match status" value="1"/>
</dbReference>
<dbReference type="InterPro" id="IPR001047">
    <property type="entry name" value="Ribosomal_eS8"/>
</dbReference>
<dbReference type="InterPro" id="IPR018283">
    <property type="entry name" value="Ribosomal_eS8_CS"/>
</dbReference>
<dbReference type="InterPro" id="IPR020919">
    <property type="entry name" value="Ribosomal_protein_eS8_arc"/>
</dbReference>
<dbReference type="InterPro" id="IPR022309">
    <property type="entry name" value="Ribosomal_Se8/biogenesis_NSA2"/>
</dbReference>
<dbReference type="NCBIfam" id="TIGR00307">
    <property type="entry name" value="eS8"/>
    <property type="match status" value="1"/>
</dbReference>
<dbReference type="PANTHER" id="PTHR10394">
    <property type="entry name" value="40S RIBOSOMAL PROTEIN S8"/>
    <property type="match status" value="1"/>
</dbReference>
<dbReference type="Pfam" id="PF01201">
    <property type="entry name" value="Ribosomal_S8e"/>
    <property type="match status" value="1"/>
</dbReference>
<dbReference type="PROSITE" id="PS01193">
    <property type="entry name" value="RIBOSOMAL_S8E"/>
    <property type="match status" value="1"/>
</dbReference>
<protein>
    <recommendedName>
        <fullName evidence="1">Small ribosomal subunit protein eS8</fullName>
    </recommendedName>
    <alternativeName>
        <fullName evidence="2">30S ribosomal protein S8e</fullName>
    </alternativeName>
</protein>
<feature type="chain" id="PRO_0000122272" description="Small ribosomal subunit protein eS8">
    <location>
        <begin position="1"/>
        <end position="127"/>
    </location>
</feature>
<gene>
    <name evidence="1" type="primary">rps8e</name>
    <name type="ordered locus">NEQ469</name>
</gene>